<proteinExistence type="inferred from homology"/>
<gene>
    <name evidence="1" type="primary">hcp</name>
    <name type="ordered locus">Shewmr4_2832</name>
</gene>
<accession>Q0HGB4</accession>
<dbReference type="EC" id="1.7.99.1" evidence="1"/>
<dbReference type="EMBL" id="CP000446">
    <property type="protein sequence ID" value="ABI39903.1"/>
    <property type="molecule type" value="Genomic_DNA"/>
</dbReference>
<dbReference type="RefSeq" id="WP_011623583.1">
    <property type="nucleotide sequence ID" value="NC_008321.1"/>
</dbReference>
<dbReference type="SMR" id="Q0HGB4"/>
<dbReference type="KEGG" id="she:Shewmr4_2832"/>
<dbReference type="HOGENOM" id="CLU_038344_2_0_6"/>
<dbReference type="GO" id="GO:0005737">
    <property type="term" value="C:cytoplasm"/>
    <property type="evidence" value="ECO:0007669"/>
    <property type="project" value="UniProtKB-SubCell"/>
</dbReference>
<dbReference type="GO" id="GO:0051537">
    <property type="term" value="F:2 iron, 2 sulfur cluster binding"/>
    <property type="evidence" value="ECO:0007669"/>
    <property type="project" value="UniProtKB-KW"/>
</dbReference>
<dbReference type="GO" id="GO:0050418">
    <property type="term" value="F:hydroxylamine reductase activity"/>
    <property type="evidence" value="ECO:0007669"/>
    <property type="project" value="UniProtKB-UniRule"/>
</dbReference>
<dbReference type="GO" id="GO:0046872">
    <property type="term" value="F:metal ion binding"/>
    <property type="evidence" value="ECO:0007669"/>
    <property type="project" value="UniProtKB-KW"/>
</dbReference>
<dbReference type="GO" id="GO:0004601">
    <property type="term" value="F:peroxidase activity"/>
    <property type="evidence" value="ECO:0007669"/>
    <property type="project" value="TreeGrafter"/>
</dbReference>
<dbReference type="GO" id="GO:0042542">
    <property type="term" value="P:response to hydrogen peroxide"/>
    <property type="evidence" value="ECO:0007669"/>
    <property type="project" value="TreeGrafter"/>
</dbReference>
<dbReference type="CDD" id="cd01914">
    <property type="entry name" value="HCP"/>
    <property type="match status" value="1"/>
</dbReference>
<dbReference type="FunFam" id="1.20.1270.20:FF:000001">
    <property type="entry name" value="Hydroxylamine reductase"/>
    <property type="match status" value="1"/>
</dbReference>
<dbReference type="FunFam" id="1.20.1270.20:FF:000002">
    <property type="entry name" value="Hydroxylamine reductase"/>
    <property type="match status" value="1"/>
</dbReference>
<dbReference type="FunFam" id="3.40.50.2030:FF:000001">
    <property type="entry name" value="Hydroxylamine reductase"/>
    <property type="match status" value="1"/>
</dbReference>
<dbReference type="FunFam" id="3.40.50.2030:FF:000002">
    <property type="entry name" value="Hydroxylamine reductase"/>
    <property type="match status" value="1"/>
</dbReference>
<dbReference type="Gene3D" id="1.20.1270.20">
    <property type="match status" value="2"/>
</dbReference>
<dbReference type="Gene3D" id="3.40.50.2030">
    <property type="match status" value="2"/>
</dbReference>
<dbReference type="HAMAP" id="MF_00069">
    <property type="entry name" value="Hydroxylam_reduct"/>
    <property type="match status" value="1"/>
</dbReference>
<dbReference type="InterPro" id="IPR004137">
    <property type="entry name" value="HCP/CODH"/>
</dbReference>
<dbReference type="InterPro" id="IPR010048">
    <property type="entry name" value="Hydroxylam_reduct"/>
</dbReference>
<dbReference type="InterPro" id="IPR016099">
    <property type="entry name" value="Prismane-like_a/b-sand"/>
</dbReference>
<dbReference type="InterPro" id="IPR011254">
    <property type="entry name" value="Prismane-like_sf"/>
</dbReference>
<dbReference type="InterPro" id="IPR016100">
    <property type="entry name" value="Prismane_a-bundle"/>
</dbReference>
<dbReference type="NCBIfam" id="TIGR01703">
    <property type="entry name" value="hybrid_clust"/>
    <property type="match status" value="1"/>
</dbReference>
<dbReference type="NCBIfam" id="NF003658">
    <property type="entry name" value="PRK05290.1"/>
    <property type="match status" value="1"/>
</dbReference>
<dbReference type="PANTHER" id="PTHR30109">
    <property type="entry name" value="HYDROXYLAMINE REDUCTASE"/>
    <property type="match status" value="1"/>
</dbReference>
<dbReference type="PANTHER" id="PTHR30109:SF0">
    <property type="entry name" value="HYDROXYLAMINE REDUCTASE"/>
    <property type="match status" value="1"/>
</dbReference>
<dbReference type="Pfam" id="PF03063">
    <property type="entry name" value="Prismane"/>
    <property type="match status" value="1"/>
</dbReference>
<dbReference type="PIRSF" id="PIRSF000076">
    <property type="entry name" value="HCP"/>
    <property type="match status" value="1"/>
</dbReference>
<dbReference type="SUPFAM" id="SSF56821">
    <property type="entry name" value="Prismane protein-like"/>
    <property type="match status" value="1"/>
</dbReference>
<name>HCP_SHESM</name>
<evidence type="ECO:0000255" key="1">
    <source>
        <dbReference type="HAMAP-Rule" id="MF_00069"/>
    </source>
</evidence>
<feature type="chain" id="PRO_1000009169" description="Hydroxylamine reductase">
    <location>
        <begin position="1"/>
        <end position="554"/>
    </location>
</feature>
<feature type="binding site" evidence="1">
    <location>
        <position position="3"/>
    </location>
    <ligand>
        <name>[2Fe-2S] cluster</name>
        <dbReference type="ChEBI" id="CHEBI:190135"/>
    </ligand>
</feature>
<feature type="binding site" evidence="1">
    <location>
        <position position="6"/>
    </location>
    <ligand>
        <name>[2Fe-2S] cluster</name>
        <dbReference type="ChEBI" id="CHEBI:190135"/>
    </ligand>
</feature>
<feature type="binding site" evidence="1">
    <location>
        <position position="18"/>
    </location>
    <ligand>
        <name>[2Fe-2S] cluster</name>
        <dbReference type="ChEBI" id="CHEBI:190135"/>
    </ligand>
</feature>
<feature type="binding site" evidence="1">
    <location>
        <position position="25"/>
    </location>
    <ligand>
        <name>[2Fe-2S] cluster</name>
        <dbReference type="ChEBI" id="CHEBI:190135"/>
    </ligand>
</feature>
<feature type="binding site" evidence="1">
    <location>
        <position position="252"/>
    </location>
    <ligand>
        <name>hybrid [4Fe-2O-2S] cluster</name>
        <dbReference type="ChEBI" id="CHEBI:60519"/>
    </ligand>
</feature>
<feature type="binding site" evidence="1">
    <location>
        <position position="276"/>
    </location>
    <ligand>
        <name>hybrid [4Fe-2O-2S] cluster</name>
        <dbReference type="ChEBI" id="CHEBI:60519"/>
    </ligand>
</feature>
<feature type="binding site" evidence="1">
    <location>
        <position position="320"/>
    </location>
    <ligand>
        <name>hybrid [4Fe-2O-2S] cluster</name>
        <dbReference type="ChEBI" id="CHEBI:60519"/>
    </ligand>
</feature>
<feature type="binding site" description="via persulfide group" evidence="1">
    <location>
        <position position="408"/>
    </location>
    <ligand>
        <name>hybrid [4Fe-2O-2S] cluster</name>
        <dbReference type="ChEBI" id="CHEBI:60519"/>
    </ligand>
</feature>
<feature type="binding site" evidence="1">
    <location>
        <position position="436"/>
    </location>
    <ligand>
        <name>hybrid [4Fe-2O-2S] cluster</name>
        <dbReference type="ChEBI" id="CHEBI:60519"/>
    </ligand>
</feature>
<feature type="binding site" evidence="1">
    <location>
        <position position="461"/>
    </location>
    <ligand>
        <name>hybrid [4Fe-2O-2S] cluster</name>
        <dbReference type="ChEBI" id="CHEBI:60519"/>
    </ligand>
</feature>
<feature type="binding site" evidence="1">
    <location>
        <position position="495"/>
    </location>
    <ligand>
        <name>hybrid [4Fe-2O-2S] cluster</name>
        <dbReference type="ChEBI" id="CHEBI:60519"/>
    </ligand>
</feature>
<feature type="binding site" evidence="1">
    <location>
        <position position="497"/>
    </location>
    <ligand>
        <name>hybrid [4Fe-2O-2S] cluster</name>
        <dbReference type="ChEBI" id="CHEBI:60519"/>
    </ligand>
</feature>
<feature type="modified residue" description="Cysteine persulfide" evidence="1">
    <location>
        <position position="408"/>
    </location>
</feature>
<reference key="1">
    <citation type="submission" date="2006-08" db="EMBL/GenBank/DDBJ databases">
        <title>Complete sequence of Shewanella sp. MR-4.</title>
        <authorList>
            <consortium name="US DOE Joint Genome Institute"/>
            <person name="Copeland A."/>
            <person name="Lucas S."/>
            <person name="Lapidus A."/>
            <person name="Barry K."/>
            <person name="Detter J.C."/>
            <person name="Glavina del Rio T."/>
            <person name="Hammon N."/>
            <person name="Israni S."/>
            <person name="Dalin E."/>
            <person name="Tice H."/>
            <person name="Pitluck S."/>
            <person name="Kiss H."/>
            <person name="Brettin T."/>
            <person name="Bruce D."/>
            <person name="Han C."/>
            <person name="Tapia R."/>
            <person name="Gilna P."/>
            <person name="Schmutz J."/>
            <person name="Larimer F."/>
            <person name="Land M."/>
            <person name="Hauser L."/>
            <person name="Kyrpides N."/>
            <person name="Mikhailova N."/>
            <person name="Nealson K."/>
            <person name="Konstantinidis K."/>
            <person name="Klappenbach J."/>
            <person name="Tiedje J."/>
            <person name="Richardson P."/>
        </authorList>
    </citation>
    <scope>NUCLEOTIDE SEQUENCE [LARGE SCALE GENOMIC DNA]</scope>
    <source>
        <strain>MR-4</strain>
    </source>
</reference>
<organism>
    <name type="scientific">Shewanella sp. (strain MR-4)</name>
    <dbReference type="NCBI Taxonomy" id="60480"/>
    <lineage>
        <taxon>Bacteria</taxon>
        <taxon>Pseudomonadati</taxon>
        <taxon>Pseudomonadota</taxon>
        <taxon>Gammaproteobacteria</taxon>
        <taxon>Alteromonadales</taxon>
        <taxon>Shewanellaceae</taxon>
        <taxon>Shewanella</taxon>
    </lineage>
</organism>
<sequence length="554" mass="60237">MFCIQCEQTIRTPAGNGCSYAQGMCGKLAATSDLQDLLIYMLQGVSVYATKARELGVVDPEVDTFVPKAFFSTLTNVNFDDERIIAYAKQAAEYRESLKNAYEAACEAAGKSAESLPPVAQFVLGTSKPEMLSQAPVALLNKDKNDIHEDILGLRLLCLYGLKGAAAYMEHARVLGKTDAEIAGRFHEIMAFLGEPSVDADKLFITAMDIGQLNYRIMAMLDAGETEAFGHPEPTVVNTKAVKGKAILVSGHDMKDLELILEQTAGKGINVYTHGEMLPALAYPAFKKYAHLVGNYGSAWQNQQKEFANFPGAVVMTSNCIIDPNVGQYSDRIFTRSIVGWPGVTHVVGDDFSVVIDKALALDGFQYDEIPHNITIGFARNALMAAAPTVVENVKNGSIKHFFLVGGCDGDKSERSYFTDLAKSAPKDSVILTLGCGKYKFNKLEFGDINGIPRLLDIGQCNDAYSAIQLAIALSQIFECDINELPLNLVLSWFEQKAIVVLLTLLSLGVKNIRTGPTPPAFLTANLAKILEEKFGLRNTTTVEADLKTMLNVA</sequence>
<comment type="function">
    <text evidence="1">Catalyzes the reduction of hydroxylamine to form NH(3) and H(2)O.</text>
</comment>
<comment type="catalytic activity">
    <reaction evidence="1">
        <text>A + NH4(+) + H2O = hydroxylamine + AH2 + H(+)</text>
        <dbReference type="Rhea" id="RHEA:22052"/>
        <dbReference type="ChEBI" id="CHEBI:13193"/>
        <dbReference type="ChEBI" id="CHEBI:15377"/>
        <dbReference type="ChEBI" id="CHEBI:15378"/>
        <dbReference type="ChEBI" id="CHEBI:15429"/>
        <dbReference type="ChEBI" id="CHEBI:17499"/>
        <dbReference type="ChEBI" id="CHEBI:28938"/>
        <dbReference type="EC" id="1.7.99.1"/>
    </reaction>
</comment>
<comment type="cofactor">
    <cofactor evidence="1">
        <name>[2Fe-2S] cluster</name>
        <dbReference type="ChEBI" id="CHEBI:190135"/>
    </cofactor>
    <text evidence="1">Binds 1 [2Fe-2S] cluster.</text>
</comment>
<comment type="cofactor">
    <cofactor evidence="1">
        <name>hybrid [4Fe-2O-2S] cluster</name>
        <dbReference type="ChEBI" id="CHEBI:60519"/>
    </cofactor>
    <text evidence="1">Binds 1 hybrid [4Fe-2O-2S] cluster.</text>
</comment>
<comment type="subcellular location">
    <subcellularLocation>
        <location evidence="1">Cytoplasm</location>
    </subcellularLocation>
</comment>
<comment type="similarity">
    <text evidence="1">Belongs to the HCP family.</text>
</comment>
<keyword id="KW-0001">2Fe-2S</keyword>
<keyword id="KW-0963">Cytoplasm</keyword>
<keyword id="KW-0408">Iron</keyword>
<keyword id="KW-0411">Iron-sulfur</keyword>
<keyword id="KW-0479">Metal-binding</keyword>
<keyword id="KW-0560">Oxidoreductase</keyword>
<protein>
    <recommendedName>
        <fullName evidence="1">Hydroxylamine reductase</fullName>
        <ecNumber evidence="1">1.7.99.1</ecNumber>
    </recommendedName>
    <alternativeName>
        <fullName evidence="1">Hybrid-cluster protein</fullName>
        <shortName evidence="1">HCP</shortName>
    </alternativeName>
    <alternativeName>
        <fullName evidence="1">Prismane protein</fullName>
    </alternativeName>
</protein>